<reference key="1">
    <citation type="journal article" date="1998" name="Science">
        <title>Genome sequence of the nematode C. elegans: a platform for investigating biology.</title>
        <authorList>
            <consortium name="The C. elegans sequencing consortium"/>
        </authorList>
    </citation>
    <scope>NUCLEOTIDE SEQUENCE [LARGE SCALE GENOMIC DNA]</scope>
    <source>
        <strain>Bristol N2</strain>
    </source>
</reference>
<reference key="2">
    <citation type="book" date="2005" name="Proceedings of the 15th international C. elegans meeting">
        <title>Innexin-16 is required for signals downstream of the defecation clock.</title>
        <authorList>
            <person name="Peters M.A."/>
            <person name="Teramoto T."/>
            <person name="Iwasaki K."/>
            <person name="Jorgensen E.M."/>
        </authorList>
    </citation>
    <scope>FUNCTION</scope>
</reference>
<feature type="chain" id="PRO_0000208515" description="Innexin-16">
    <location>
        <begin position="1"/>
        <end position="372"/>
    </location>
</feature>
<feature type="transmembrane region" description="Helical" evidence="4">
    <location>
        <begin position="31"/>
        <end position="51"/>
    </location>
</feature>
<feature type="transmembrane region" description="Helical" evidence="4">
    <location>
        <begin position="106"/>
        <end position="126"/>
    </location>
</feature>
<feature type="transmembrane region" description="Helical" evidence="4">
    <location>
        <begin position="181"/>
        <end position="201"/>
    </location>
</feature>
<feature type="transmembrane region" description="Helical" evidence="4">
    <location>
        <begin position="263"/>
        <end position="283"/>
    </location>
</feature>
<feature type="glycosylation site" description="N-linked (GlcNAc...) asparagine" evidence="3">
    <location>
        <position position="352"/>
    </location>
</feature>
<gene>
    <name type="primary">inx-16</name>
    <name type="synonym">opu-16</name>
    <name type="ORF">R12E2.5</name>
</gene>
<sequence length="372" mass="43086">MSMLGNIKTYAQTVTSLSDNDDTSIDRLNYVVTTSILIAFSLLLFAKNYVGEPMQCWTPNQFAGGWESFAESYCFIENTYFVPMQDSNLPAAETREGREMIYYQWVPFLLVIQALFFCVPRAFWIIYPSYSGLTIADMITAARQNGKQLEGADEALEQVAMINWRTEQQKGHGSRIFNCYLVMKLLILLNIVLQFFLLNSFLNTAYTFWGWGIFWDMVNGRHWQESGHFPRVSFCDINVRELGNIHHWSLQCVLMVNMFNEKIFIFLWFWFAFLLVATAGDFVIWVWRRFDSNSKLGFILDLLNQEGIDHSPQKASELYKNVLRDDGVLFLRLLDSNSGRLNSEELMKKIYNISVGHATDLNTPIEEHATSE</sequence>
<dbReference type="EMBL" id="FO080613">
    <property type="protein sequence ID" value="CCD65172.1"/>
    <property type="molecule type" value="Genomic_DNA"/>
</dbReference>
<dbReference type="PIR" id="T33091">
    <property type="entry name" value="T33091"/>
</dbReference>
<dbReference type="RefSeq" id="NP_491314.1">
    <property type="nucleotide sequence ID" value="NM_058913.6"/>
</dbReference>
<dbReference type="SMR" id="O61787"/>
<dbReference type="BioGRID" id="37476">
    <property type="interactions" value="4"/>
</dbReference>
<dbReference type="FunCoup" id="O61787">
    <property type="interactions" value="262"/>
</dbReference>
<dbReference type="STRING" id="6239.R12E2.5.2"/>
<dbReference type="GlyCosmos" id="O61787">
    <property type="glycosylation" value="1 site, No reported glycans"/>
</dbReference>
<dbReference type="iPTMnet" id="O61787"/>
<dbReference type="PaxDb" id="6239-R12E2.5"/>
<dbReference type="PeptideAtlas" id="O61787"/>
<dbReference type="EnsemblMetazoa" id="R12E2.5.1">
    <property type="protein sequence ID" value="R12E2.5.1"/>
    <property type="gene ID" value="WBGene00002138"/>
</dbReference>
<dbReference type="EnsemblMetazoa" id="R12E2.5.2">
    <property type="protein sequence ID" value="R12E2.5.2"/>
    <property type="gene ID" value="WBGene00002138"/>
</dbReference>
<dbReference type="GeneID" id="172005"/>
<dbReference type="KEGG" id="cel:CELE_R12E2.5"/>
<dbReference type="UCSC" id="R12E2.5">
    <property type="organism name" value="c. elegans"/>
</dbReference>
<dbReference type="AGR" id="WB:WBGene00002138"/>
<dbReference type="CTD" id="172005"/>
<dbReference type="WormBase" id="R12E2.5">
    <property type="protein sequence ID" value="CE28765"/>
    <property type="gene ID" value="WBGene00002138"/>
    <property type="gene designation" value="inx-16"/>
</dbReference>
<dbReference type="eggNOG" id="ENOG502QWRS">
    <property type="taxonomic scope" value="Eukaryota"/>
</dbReference>
<dbReference type="HOGENOM" id="CLU_035763_0_1_1"/>
<dbReference type="InParanoid" id="O61787"/>
<dbReference type="OMA" id="DCHCPTL"/>
<dbReference type="OrthoDB" id="5867527at2759"/>
<dbReference type="PhylomeDB" id="O61787"/>
<dbReference type="PRO" id="PR:O61787"/>
<dbReference type="Proteomes" id="UP000001940">
    <property type="component" value="Chromosome I"/>
</dbReference>
<dbReference type="Bgee" id="WBGene00002138">
    <property type="expression patterns" value="Expressed in larva and 3 other cell types or tissues"/>
</dbReference>
<dbReference type="GO" id="GO:0005921">
    <property type="term" value="C:gap junction"/>
    <property type="evidence" value="ECO:0000314"/>
    <property type="project" value="WormBase"/>
</dbReference>
<dbReference type="GO" id="GO:0005886">
    <property type="term" value="C:plasma membrane"/>
    <property type="evidence" value="ECO:0000250"/>
    <property type="project" value="UniProtKB"/>
</dbReference>
<dbReference type="GO" id="GO:0005243">
    <property type="term" value="F:gap junction channel activity"/>
    <property type="evidence" value="ECO:0000250"/>
    <property type="project" value="UniProtKB"/>
</dbReference>
<dbReference type="GO" id="GO:0055077">
    <property type="term" value="F:gap junction hemi-channel activity"/>
    <property type="evidence" value="ECO:0000250"/>
    <property type="project" value="UniProtKB"/>
</dbReference>
<dbReference type="GO" id="GO:0019722">
    <property type="term" value="P:calcium-mediated signaling"/>
    <property type="evidence" value="ECO:0000315"/>
    <property type="project" value="WormBase"/>
</dbReference>
<dbReference type="GO" id="GO:0034220">
    <property type="term" value="P:monoatomic ion transmembrane transport"/>
    <property type="evidence" value="ECO:0007669"/>
    <property type="project" value="UniProtKB-KW"/>
</dbReference>
<dbReference type="GO" id="GO:2000746">
    <property type="term" value="P:regulation of defecation rhythm"/>
    <property type="evidence" value="ECO:0000315"/>
    <property type="project" value="WormBase"/>
</dbReference>
<dbReference type="GO" id="GO:1900073">
    <property type="term" value="P:regulation of neuromuscular synaptic transmission"/>
    <property type="evidence" value="ECO:0000315"/>
    <property type="project" value="WormBase"/>
</dbReference>
<dbReference type="InterPro" id="IPR000990">
    <property type="entry name" value="Innexin"/>
</dbReference>
<dbReference type="PANTHER" id="PTHR11893">
    <property type="entry name" value="INNEXIN"/>
    <property type="match status" value="1"/>
</dbReference>
<dbReference type="PANTHER" id="PTHR11893:SF6">
    <property type="entry name" value="INNEXIN-16"/>
    <property type="match status" value="1"/>
</dbReference>
<dbReference type="Pfam" id="PF00876">
    <property type="entry name" value="Innexin"/>
    <property type="match status" value="1"/>
</dbReference>
<dbReference type="PRINTS" id="PR01262">
    <property type="entry name" value="INNEXIN"/>
</dbReference>
<dbReference type="PROSITE" id="PS51013">
    <property type="entry name" value="PANNEXIN"/>
    <property type="match status" value="1"/>
</dbReference>
<accession>O61787</accession>
<protein>
    <recommendedName>
        <fullName>Innexin-16</fullName>
    </recommendedName>
    <alternativeName>
        <fullName>Protein opu-16</fullName>
    </alternativeName>
</protein>
<organism>
    <name type="scientific">Caenorhabditis elegans</name>
    <dbReference type="NCBI Taxonomy" id="6239"/>
    <lineage>
        <taxon>Eukaryota</taxon>
        <taxon>Metazoa</taxon>
        <taxon>Ecdysozoa</taxon>
        <taxon>Nematoda</taxon>
        <taxon>Chromadorea</taxon>
        <taxon>Rhabditida</taxon>
        <taxon>Rhabditina</taxon>
        <taxon>Rhabditomorpha</taxon>
        <taxon>Rhabditoidea</taxon>
        <taxon>Rhabditidae</taxon>
        <taxon>Peloderinae</taxon>
        <taxon>Caenorhabditis</taxon>
    </lineage>
</organism>
<evidence type="ECO:0000250" key="1"/>
<evidence type="ECO:0000250" key="2">
    <source>
        <dbReference type="UniProtKB" id="O61715"/>
    </source>
</evidence>
<evidence type="ECO:0000255" key="3"/>
<evidence type="ECO:0000255" key="4">
    <source>
        <dbReference type="PROSITE-ProRule" id="PRU00351"/>
    </source>
</evidence>
<evidence type="ECO:0000269" key="5">
    <source ref="2"/>
</evidence>
<evidence type="ECO:0000305" key="6"/>
<name>INX16_CAEEL</name>
<keyword id="KW-0965">Cell junction</keyword>
<keyword id="KW-1003">Cell membrane</keyword>
<keyword id="KW-0303">Gap junction</keyword>
<keyword id="KW-0325">Glycoprotein</keyword>
<keyword id="KW-0407">Ion channel</keyword>
<keyword id="KW-0406">Ion transport</keyword>
<keyword id="KW-0472">Membrane</keyword>
<keyword id="KW-1185">Reference proteome</keyword>
<keyword id="KW-0812">Transmembrane</keyword>
<keyword id="KW-1133">Transmembrane helix</keyword>
<keyword id="KW-0813">Transport</keyword>
<comment type="function">
    <text evidence="2 5">Structural component of the gap junctions (By similarity). Required for signals downstream of defecation clock (Ref.2).</text>
</comment>
<comment type="subcellular location">
    <subcellularLocation>
        <location evidence="6">Cell membrane</location>
        <topology evidence="4">Multi-pass membrane protein</topology>
    </subcellularLocation>
    <subcellularLocation>
        <location evidence="1">Cell junction</location>
        <location evidence="1">Gap junction</location>
    </subcellularLocation>
</comment>
<comment type="similarity">
    <text evidence="4">Belongs to the pannexin family.</text>
</comment>
<proteinExistence type="inferred from homology"/>